<feature type="chain" id="PRO_0000333088" description="Na(+)/H(+) antiporter NhaB">
    <location>
        <begin position="1"/>
        <end position="526"/>
    </location>
</feature>
<feature type="transmembrane region" description="Helical" evidence="1">
    <location>
        <begin position="14"/>
        <end position="34"/>
    </location>
</feature>
<feature type="transmembrane region" description="Helical" evidence="1">
    <location>
        <begin position="35"/>
        <end position="55"/>
    </location>
</feature>
<feature type="transmembrane region" description="Helical" evidence="1">
    <location>
        <begin position="99"/>
        <end position="119"/>
    </location>
</feature>
<feature type="transmembrane region" description="Helical" evidence="1">
    <location>
        <begin position="122"/>
        <end position="142"/>
    </location>
</feature>
<feature type="transmembrane region" description="Helical" evidence="1">
    <location>
        <begin position="146"/>
        <end position="166"/>
    </location>
</feature>
<feature type="transmembrane region" description="Helical" evidence="1">
    <location>
        <begin position="206"/>
        <end position="226"/>
    </location>
</feature>
<feature type="transmembrane region" description="Helical" evidence="1">
    <location>
        <begin position="239"/>
        <end position="259"/>
    </location>
</feature>
<feature type="transmembrane region" description="Helical" evidence="1">
    <location>
        <begin position="307"/>
        <end position="327"/>
    </location>
</feature>
<feature type="transmembrane region" description="Helical" evidence="1">
    <location>
        <begin position="328"/>
        <end position="348"/>
    </location>
</feature>
<feature type="transmembrane region" description="Helical" evidence="1">
    <location>
        <begin position="357"/>
        <end position="377"/>
    </location>
</feature>
<feature type="transmembrane region" description="Helical" evidence="1">
    <location>
        <begin position="397"/>
        <end position="417"/>
    </location>
</feature>
<feature type="transmembrane region" description="Helical" evidence="1">
    <location>
        <begin position="451"/>
        <end position="471"/>
    </location>
</feature>
<feature type="transmembrane region" description="Helical" evidence="1">
    <location>
        <begin position="479"/>
        <end position="499"/>
    </location>
</feature>
<keyword id="KW-0050">Antiport</keyword>
<keyword id="KW-0997">Cell inner membrane</keyword>
<keyword id="KW-1003">Cell membrane</keyword>
<keyword id="KW-0406">Ion transport</keyword>
<keyword id="KW-0472">Membrane</keyword>
<keyword id="KW-1185">Reference proteome</keyword>
<keyword id="KW-0915">Sodium</keyword>
<keyword id="KW-0739">Sodium transport</keyword>
<keyword id="KW-0812">Transmembrane</keyword>
<keyword id="KW-1133">Transmembrane helix</keyword>
<keyword id="KW-0813">Transport</keyword>
<sequence>MIAMPLHRALLKNFLGYAPDWYKLTIFGFLLINPLLFYFVSPFWAGWLLVVEFIFTLGMALKCYPLQPGGLLALQAILIGMTSPQQVWHEVTGNIEVLMLLVFMVAGIYFMKQLLLFVFTKLLLRIHSKPLLSLAFCMAAAFLSAFLDALTVIAVIISVAIGFYGIYHRFASQQGEDEADISDDSALNGEEHHRTLDQFRAFLRSLMMHAGVGTALGGVMTMVGEPQNLIIAKSAGWDFVDFFLRMSPVTVPVFICGILTCVLVERFKLFGYGVNLPDNVRRVLEDYDRDMTEKRTQQDKVRLLVQAVIGVWLIIALAFHLAEVGLIGLSVIIMATTFCGVTEEHAIGKAFQDAMPFTALLTVFFAIVAVIIDQQLFSPIIHYVLQSSDSAQLTQFYLFNGLLSSISDNVFVGSVYINEARNAFESGKISLPQFELLAVAINTGTNLPSVATPNGQAAFLFLLTSSLAPLIRLSYGRMVIMALPYTIVMTLVGLLCVEFTLVPFTDFLMNNHWISLPNLTISGSHA</sequence>
<dbReference type="EMBL" id="BX950851">
    <property type="protein sequence ID" value="CAG75264.1"/>
    <property type="molecule type" value="Genomic_DNA"/>
</dbReference>
<dbReference type="RefSeq" id="WP_011093918.1">
    <property type="nucleotide sequence ID" value="NC_004547.2"/>
</dbReference>
<dbReference type="SMR" id="Q6D4M9"/>
<dbReference type="STRING" id="218491.ECA2361"/>
<dbReference type="KEGG" id="eca:ECA2361"/>
<dbReference type="PATRIC" id="fig|218491.5.peg.2386"/>
<dbReference type="eggNOG" id="COG3067">
    <property type="taxonomic scope" value="Bacteria"/>
</dbReference>
<dbReference type="HOGENOM" id="CLU_041110_0_0_6"/>
<dbReference type="OrthoDB" id="5288732at2"/>
<dbReference type="Proteomes" id="UP000007966">
    <property type="component" value="Chromosome"/>
</dbReference>
<dbReference type="GO" id="GO:0005886">
    <property type="term" value="C:plasma membrane"/>
    <property type="evidence" value="ECO:0007669"/>
    <property type="project" value="UniProtKB-SubCell"/>
</dbReference>
<dbReference type="GO" id="GO:0015385">
    <property type="term" value="F:sodium:proton antiporter activity"/>
    <property type="evidence" value="ECO:0007669"/>
    <property type="project" value="InterPro"/>
</dbReference>
<dbReference type="HAMAP" id="MF_01599">
    <property type="entry name" value="NhaB"/>
    <property type="match status" value="1"/>
</dbReference>
<dbReference type="InterPro" id="IPR004671">
    <property type="entry name" value="Na+/H+_antiporter_NhaB"/>
</dbReference>
<dbReference type="NCBIfam" id="TIGR00774">
    <property type="entry name" value="NhaB"/>
    <property type="match status" value="1"/>
</dbReference>
<dbReference type="NCBIfam" id="NF007093">
    <property type="entry name" value="PRK09547.1"/>
    <property type="match status" value="1"/>
</dbReference>
<dbReference type="PANTHER" id="PTHR43302:SF1">
    <property type="entry name" value="NA(+)_H(+) ANTIPORTER NHAB"/>
    <property type="match status" value="1"/>
</dbReference>
<dbReference type="PANTHER" id="PTHR43302">
    <property type="entry name" value="TRANSPORTER ARSB-RELATED"/>
    <property type="match status" value="1"/>
</dbReference>
<dbReference type="Pfam" id="PF06450">
    <property type="entry name" value="NhaB"/>
    <property type="match status" value="1"/>
</dbReference>
<comment type="function">
    <text evidence="1">Na(+)/H(+) antiporter that extrudes sodium in exchange for external protons.</text>
</comment>
<comment type="catalytic activity">
    <reaction evidence="1">
        <text>2 Na(+)(in) + 3 H(+)(out) = 2 Na(+)(out) + 3 H(+)(in)</text>
        <dbReference type="Rhea" id="RHEA:29247"/>
        <dbReference type="ChEBI" id="CHEBI:15378"/>
        <dbReference type="ChEBI" id="CHEBI:29101"/>
    </reaction>
    <physiologicalReaction direction="left-to-right" evidence="1">
        <dbReference type="Rhea" id="RHEA:29248"/>
    </physiologicalReaction>
</comment>
<comment type="subcellular location">
    <subcellularLocation>
        <location evidence="1">Cell inner membrane</location>
        <topology evidence="1">Multi-pass membrane protein</topology>
    </subcellularLocation>
</comment>
<comment type="similarity">
    <text evidence="1">Belongs to the NhaB Na(+)/H(+) (TC 2.A.34) antiporter family.</text>
</comment>
<protein>
    <recommendedName>
        <fullName evidence="1">Na(+)/H(+) antiporter NhaB</fullName>
    </recommendedName>
    <alternativeName>
        <fullName evidence="1">Sodium/proton antiporter NhaB</fullName>
    </alternativeName>
</protein>
<gene>
    <name evidence="1" type="primary">nhaB</name>
    <name type="ordered locus">ECA2361</name>
</gene>
<proteinExistence type="inferred from homology"/>
<organism>
    <name type="scientific">Pectobacterium atrosepticum (strain SCRI 1043 / ATCC BAA-672)</name>
    <name type="common">Erwinia carotovora subsp. atroseptica</name>
    <dbReference type="NCBI Taxonomy" id="218491"/>
    <lineage>
        <taxon>Bacteria</taxon>
        <taxon>Pseudomonadati</taxon>
        <taxon>Pseudomonadota</taxon>
        <taxon>Gammaproteobacteria</taxon>
        <taxon>Enterobacterales</taxon>
        <taxon>Pectobacteriaceae</taxon>
        <taxon>Pectobacterium</taxon>
    </lineage>
</organism>
<accession>Q6D4M9</accession>
<reference key="1">
    <citation type="journal article" date="2004" name="Proc. Natl. Acad. Sci. U.S.A.">
        <title>Genome sequence of the enterobacterial phytopathogen Erwinia carotovora subsp. atroseptica and characterization of virulence factors.</title>
        <authorList>
            <person name="Bell K.S."/>
            <person name="Sebaihia M."/>
            <person name="Pritchard L."/>
            <person name="Holden M.T.G."/>
            <person name="Hyman L.J."/>
            <person name="Holeva M.C."/>
            <person name="Thomson N.R."/>
            <person name="Bentley S.D."/>
            <person name="Churcher L.J.C."/>
            <person name="Mungall K."/>
            <person name="Atkin R."/>
            <person name="Bason N."/>
            <person name="Brooks K."/>
            <person name="Chillingworth T."/>
            <person name="Clark K."/>
            <person name="Doggett J."/>
            <person name="Fraser A."/>
            <person name="Hance Z."/>
            <person name="Hauser H."/>
            <person name="Jagels K."/>
            <person name="Moule S."/>
            <person name="Norbertczak H."/>
            <person name="Ormond D."/>
            <person name="Price C."/>
            <person name="Quail M.A."/>
            <person name="Sanders M."/>
            <person name="Walker D."/>
            <person name="Whitehead S."/>
            <person name="Salmond G.P.C."/>
            <person name="Birch P.R.J."/>
            <person name="Parkhill J."/>
            <person name="Toth I.K."/>
        </authorList>
    </citation>
    <scope>NUCLEOTIDE SEQUENCE [LARGE SCALE GENOMIC DNA]</scope>
    <source>
        <strain>SCRI 1043 / ATCC BAA-672</strain>
    </source>
</reference>
<evidence type="ECO:0000255" key="1">
    <source>
        <dbReference type="HAMAP-Rule" id="MF_01599"/>
    </source>
</evidence>
<name>NHAB_PECAS</name>